<evidence type="ECO:0000269" key="1">
    <source>
    </source>
</evidence>
<evidence type="ECO:0000269" key="2">
    <source>
    </source>
</evidence>
<evidence type="ECO:0000269" key="3">
    <source>
    </source>
</evidence>
<evidence type="ECO:0000269" key="4">
    <source>
    </source>
</evidence>
<evidence type="ECO:0000305" key="5"/>
<reference key="1">
    <citation type="journal article" date="1989" name="J. Bacteriol.">
        <title>Genetic and molecular analyses of the gene encoding staphylococcal enterotoxin D.</title>
        <authorList>
            <person name="Bayles K.W."/>
            <person name="Iandolo J.J."/>
        </authorList>
    </citation>
    <scope>NUCLEOTIDE SEQUENCE [GENOMIC DNA]</scope>
</reference>
<reference key="2">
    <citation type="journal article" date="1996" name="EMBO J.">
        <title>The crystal structure of staphylococcal enterotoxin type D reveals Zn2+-mediated homodimerization.</title>
        <authorList>
            <person name="Sundstroem M."/>
            <person name="Abrahmsen L."/>
            <person name="Antonsson P."/>
            <person name="Mehindate K."/>
            <person name="Mourad W."/>
            <person name="Dohlsten M."/>
        </authorList>
    </citation>
    <scope>NUCLEOTIDE SEQUENCE [GENOMIC DNA]</scope>
    <scope>X-RAY CRYSTALLOGRAPHY (2.3 ANGSTROMS) IN COMPLEX WITH ZINC</scope>
    <scope>SUBUNIT</scope>
    <scope>INTERACTION WITH HOST HLA-DRA AND HLA-DRB1</scope>
    <source>
        <strain>ATCC 23235 / NCTC 10656</strain>
    </source>
</reference>
<reference key="3">
    <citation type="journal article" date="1996" name="J. Immunol.">
        <title>Staphylococcal enterotoxin D functions as a human B cell superantigen by rescuing VH4-expressing B cells from apoptosis.</title>
        <authorList>
            <person name="Domiati-Saad R."/>
            <person name="Attrep J.F."/>
            <person name="Brezinschek H.P."/>
            <person name="Cherrie A.H."/>
            <person name="Karp D.R."/>
            <person name="Lipsky P.E."/>
        </authorList>
    </citation>
    <scope>FUNCTION</scope>
</reference>
<reference key="4">
    <citation type="journal article" date="1998" name="J. Immunol.">
        <title>Staphylococcal enterotoxin D is a promiscuous superantigen offering multiple modes of interactions with the MHC class II receptors.</title>
        <authorList>
            <person name="Al-Daccak R."/>
            <person name="Mehindate K."/>
            <person name="Damdoumi F."/>
            <person name="Etongue-Mayer P."/>
            <person name="Nilsson H."/>
            <person name="Antonsson P."/>
            <person name="Sundstroem M."/>
            <person name="Dohlsten M."/>
            <person name="Sekaly R.P."/>
            <person name="Mourad W."/>
        </authorList>
    </citation>
    <scope>FUNCTION</scope>
    <scope>SUBUNIT</scope>
    <scope>MUTAGENESIS OF PHE-72; ASP-212; HIS-248 AND ASP-252</scope>
    <scope>INTERACTION WITH HOST HLA-DRB1</scope>
</reference>
<reference key="5">
    <citation type="journal article" date="2007" name="Int. J. Food Microbiol.">
        <title>Characterization of Staphylococcus aureus strains associated with food poisoning outbreaks in France.</title>
        <authorList>
            <person name="Kerouanton A."/>
            <person name="Hennekinne J.A."/>
            <person name="Letertre C."/>
            <person name="Petit L."/>
            <person name="Chesneau O."/>
            <person name="Brisabois A."/>
            <person name="De Buyser M.L."/>
        </authorList>
    </citation>
    <scope>FUNCTION</scope>
</reference>
<proteinExistence type="evidence at protein level"/>
<sequence length="258" mass="29746">MKKFNILIALLFFTSLVISPLNVKANENIDSVKEKELHKKSELSSTALNNMKHSYADKNPIIGENKSTGDQFLENTLLYKKFFTDLINFEDLLINFNSKEMAQHFKSKNVDVYPIRYSINCYGGEIDRTACTYGGVTPHEGNKLKERKKIPINLWINGVQKEVSLDKVQTDKKNVTVQELDAQARRYLQKDLKLYNNDTLGGKIQRGKIEFDSSDGSKVSYDLFDVKGDFPEKQLRIYSDNKTLSTEHLHIDIYLYEK</sequence>
<dbReference type="EMBL" id="M28521">
    <property type="protein sequence ID" value="AAB06195.1"/>
    <property type="molecule type" value="Genomic_DNA"/>
</dbReference>
<dbReference type="PIR" id="A33953">
    <property type="entry name" value="A33953"/>
</dbReference>
<dbReference type="SMR" id="P20723"/>
<dbReference type="Allergome" id="2142">
    <property type="allergen name" value="Sta a SED"/>
</dbReference>
<dbReference type="PRO" id="PR:P20723"/>
<dbReference type="GO" id="GO:0005576">
    <property type="term" value="C:extracellular region"/>
    <property type="evidence" value="ECO:0007669"/>
    <property type="project" value="UniProtKB-SubCell"/>
</dbReference>
<dbReference type="GO" id="GO:0046872">
    <property type="term" value="F:metal ion binding"/>
    <property type="evidence" value="ECO:0007669"/>
    <property type="project" value="UniProtKB-KW"/>
</dbReference>
<dbReference type="GO" id="GO:0090729">
    <property type="term" value="F:toxin activity"/>
    <property type="evidence" value="ECO:0000314"/>
    <property type="project" value="UniProtKB"/>
</dbReference>
<dbReference type="Gene3D" id="2.40.50.110">
    <property type="match status" value="1"/>
</dbReference>
<dbReference type="Gene3D" id="3.10.20.120">
    <property type="match status" value="1"/>
</dbReference>
<dbReference type="InterPro" id="IPR008992">
    <property type="entry name" value="Enterotoxin"/>
</dbReference>
<dbReference type="InterPro" id="IPR006126">
    <property type="entry name" value="Staph/Strept_toxin_CS"/>
</dbReference>
<dbReference type="InterPro" id="IPR006173">
    <property type="entry name" value="Staph_tox_OB"/>
</dbReference>
<dbReference type="InterPro" id="IPR016091">
    <property type="entry name" value="SuperAg_toxin_C"/>
</dbReference>
<dbReference type="InterPro" id="IPR013307">
    <property type="entry name" value="Superantigen_bac"/>
</dbReference>
<dbReference type="InterPro" id="IPR006123">
    <property type="entry name" value="Toxin_b-grasp_Staph/Strep"/>
</dbReference>
<dbReference type="InterPro" id="IPR006177">
    <property type="entry name" value="Toxin_bac"/>
</dbReference>
<dbReference type="Pfam" id="PF02876">
    <property type="entry name" value="Stap_Strp_tox_C"/>
    <property type="match status" value="1"/>
</dbReference>
<dbReference type="Pfam" id="PF01123">
    <property type="entry name" value="Stap_Strp_toxin"/>
    <property type="match status" value="1"/>
</dbReference>
<dbReference type="PRINTS" id="PR00279">
    <property type="entry name" value="BACTRLTOXIN"/>
</dbReference>
<dbReference type="PRINTS" id="PR01898">
    <property type="entry name" value="SAGSUPRFAMLY"/>
</dbReference>
<dbReference type="SUPFAM" id="SSF50203">
    <property type="entry name" value="Bacterial enterotoxins"/>
    <property type="match status" value="1"/>
</dbReference>
<dbReference type="SUPFAM" id="SSF54334">
    <property type="entry name" value="Superantigen toxins, C-terminal domain"/>
    <property type="match status" value="1"/>
</dbReference>
<dbReference type="PROSITE" id="PS00277">
    <property type="entry name" value="STAPH_STREP_TOXIN_1"/>
    <property type="match status" value="1"/>
</dbReference>
<dbReference type="PROSITE" id="PS00278">
    <property type="entry name" value="STAPH_STREP_TOXIN_2"/>
    <property type="match status" value="1"/>
</dbReference>
<name>ETXD_STAAU</name>
<comment type="function">
    <text evidence="1 2 4">Staphylococcal enterotoxin that activates the host immune system by binding as unprocessed molecules to major histocompatibility (MHC) complex class II and T-cell receptor (TCR) molecules. In turn, this ternary complex activates a large number of T-lymphocytes initiating a systemic release of pro-inflammatory cytokines (PubMed:9551975). In addition, induces B-cell proliferation and differentiation in the presence of T-cells (PubMed:8621894). Causes also the intoxication staphylococcal food poisoning syndrome (PubMed:17306397).</text>
</comment>
<comment type="cofactor">
    <cofactor>
        <name>Zn(2+)</name>
        <dbReference type="ChEBI" id="CHEBI:29105"/>
    </cofactor>
    <text evidence="3">A zinc-binding site contributes directly to formation of the homodimer.</text>
</comment>
<comment type="subunit">
    <text evidence="3 4">Homodimer; zinc-dependent (PubMed:9003758). Interacts with MHC class II molecules composed of alpha/HLA-DRA and beta/HLA-DRB1 chains (PubMed:9003758, PubMed:9551975).</text>
</comment>
<comment type="subcellular location">
    <subcellularLocation>
        <location>Secreted</location>
    </subcellularLocation>
</comment>
<comment type="similarity">
    <text evidence="5">Belongs to the staphylococcal/streptococcal toxin family.</text>
</comment>
<keyword id="KW-0260">Enterotoxin</keyword>
<keyword id="KW-0479">Metal-binding</keyword>
<keyword id="KW-0964">Secreted</keyword>
<keyword id="KW-0732">Signal</keyword>
<keyword id="KW-0766">Superantigen</keyword>
<keyword id="KW-0800">Toxin</keyword>
<keyword id="KW-0843">Virulence</keyword>
<keyword id="KW-0862">Zinc</keyword>
<protein>
    <recommendedName>
        <fullName>Enterotoxin type D</fullName>
    </recommendedName>
    <alternativeName>
        <fullName>SED</fullName>
    </alternativeName>
</protein>
<feature type="signal peptide">
    <location>
        <begin position="1"/>
        <end position="25"/>
    </location>
</feature>
<feature type="chain" id="PRO_0000035612" description="Enterotoxin type D">
    <location>
        <begin position="26"/>
        <end position="258"/>
    </location>
</feature>
<feature type="binding site" description="in other chain" evidence="3">
    <location>
        <position position="212"/>
    </location>
    <ligand>
        <name>Zn(2+)</name>
        <dbReference type="ChEBI" id="CHEBI:29105"/>
        <note>ligand shared between two neighboring subunits</note>
    </ligand>
</feature>
<feature type="binding site" evidence="3">
    <location>
        <position position="248"/>
    </location>
    <ligand>
        <name>Zn(2+)</name>
        <dbReference type="ChEBI" id="CHEBI:29105"/>
        <note>ligand shared between two neighboring subunits</note>
    </ligand>
</feature>
<feature type="binding site" description="in other chain" evidence="3">
    <location>
        <position position="250"/>
    </location>
    <ligand>
        <name>Zn(2+)</name>
        <dbReference type="ChEBI" id="CHEBI:29105"/>
        <note>ligand shared between two neighboring subunits</note>
    </ligand>
</feature>
<feature type="binding site" description="in other chain" evidence="3">
    <location>
        <position position="252"/>
    </location>
    <ligand>
        <name>Zn(2+)</name>
        <dbReference type="ChEBI" id="CHEBI:29105"/>
        <note>ligand shared between two neighboring subunits</note>
    </ligand>
</feature>
<feature type="sequence variant" description="In strain: ATCC 23235.">
    <original>P</original>
    <variation>A</variation>
    <location>
        <position position="114"/>
    </location>
</feature>
<feature type="mutagenesis site" description="Complete loss of host cytokine gene expression." evidence="4">
    <original>F</original>
    <variation>A</variation>
    <location>
        <position position="72"/>
    </location>
</feature>
<feature type="mutagenesis site" description="Complete loss of host cytokine gene expression." evidence="4">
    <original>D</original>
    <variation>A</variation>
    <location>
        <position position="212"/>
    </location>
</feature>
<feature type="mutagenesis site" description="Complete loss of host cytokine gene expression." evidence="4">
    <original>H</original>
    <variation>A</variation>
    <location>
        <position position="248"/>
    </location>
</feature>
<feature type="mutagenesis site" description="Complete loss of host cytokine gene expression." evidence="4">
    <original>D</original>
    <variation>A</variation>
    <location>
        <position position="252"/>
    </location>
</feature>
<organism>
    <name type="scientific">Staphylococcus aureus</name>
    <dbReference type="NCBI Taxonomy" id="1280"/>
    <lineage>
        <taxon>Bacteria</taxon>
        <taxon>Bacillati</taxon>
        <taxon>Bacillota</taxon>
        <taxon>Bacilli</taxon>
        <taxon>Bacillales</taxon>
        <taxon>Staphylococcaceae</taxon>
        <taxon>Staphylococcus</taxon>
    </lineage>
</organism>
<gene>
    <name type="primary">entD</name>
</gene>
<accession>P20723</accession>